<gene>
    <name evidence="1" type="primary">uppP</name>
    <name type="ordered locus">CMM_1695</name>
</gene>
<proteinExistence type="inferred from homology"/>
<comment type="function">
    <text evidence="1">Catalyzes the dephosphorylation of undecaprenyl diphosphate (UPP). Confers resistance to bacitracin.</text>
</comment>
<comment type="catalytic activity">
    <reaction evidence="1">
        <text>di-trans,octa-cis-undecaprenyl diphosphate + H2O = di-trans,octa-cis-undecaprenyl phosphate + phosphate + H(+)</text>
        <dbReference type="Rhea" id="RHEA:28094"/>
        <dbReference type="ChEBI" id="CHEBI:15377"/>
        <dbReference type="ChEBI" id="CHEBI:15378"/>
        <dbReference type="ChEBI" id="CHEBI:43474"/>
        <dbReference type="ChEBI" id="CHEBI:58405"/>
        <dbReference type="ChEBI" id="CHEBI:60392"/>
        <dbReference type="EC" id="3.6.1.27"/>
    </reaction>
</comment>
<comment type="subcellular location">
    <subcellularLocation>
        <location evidence="1">Cell membrane</location>
        <topology evidence="1">Multi-pass membrane protein</topology>
    </subcellularLocation>
</comment>
<comment type="miscellaneous">
    <text>Bacitracin is thought to be involved in the inhibition of peptidoglycan synthesis by sequestering undecaprenyl diphosphate, thereby reducing the pool of lipid carrier available.</text>
</comment>
<comment type="similarity">
    <text evidence="1">Belongs to the UppP family.</text>
</comment>
<reference key="1">
    <citation type="journal article" date="2008" name="J. Bacteriol.">
        <title>The genome sequence of the tomato-pathogenic actinomycete Clavibacter michiganensis subsp. michiganensis NCPPB382 reveals a large island involved in pathogenicity.</title>
        <authorList>
            <person name="Gartemann K.-H."/>
            <person name="Abt B."/>
            <person name="Bekel T."/>
            <person name="Burger A."/>
            <person name="Engemann J."/>
            <person name="Fluegel M."/>
            <person name="Gaigalat L."/>
            <person name="Goesmann A."/>
            <person name="Graefen I."/>
            <person name="Kalinowski J."/>
            <person name="Kaup O."/>
            <person name="Kirchner O."/>
            <person name="Krause L."/>
            <person name="Linke B."/>
            <person name="McHardy A."/>
            <person name="Meyer F."/>
            <person name="Pohle S."/>
            <person name="Rueckert C."/>
            <person name="Schneiker S."/>
            <person name="Zellermann E.-M."/>
            <person name="Puehler A."/>
            <person name="Eichenlaub R."/>
            <person name="Kaiser O."/>
            <person name="Bartels D."/>
        </authorList>
    </citation>
    <scope>NUCLEOTIDE SEQUENCE [LARGE SCALE GENOMIC DNA]</scope>
    <source>
        <strain>NCPPB 382</strain>
    </source>
</reference>
<accession>A5CRN8</accession>
<name>UPPP_CLAM3</name>
<organism>
    <name type="scientific">Clavibacter michiganensis subsp. michiganensis (strain NCPPB 382)</name>
    <dbReference type="NCBI Taxonomy" id="443906"/>
    <lineage>
        <taxon>Bacteria</taxon>
        <taxon>Bacillati</taxon>
        <taxon>Actinomycetota</taxon>
        <taxon>Actinomycetes</taxon>
        <taxon>Micrococcales</taxon>
        <taxon>Microbacteriaceae</taxon>
        <taxon>Clavibacter</taxon>
    </lineage>
</organism>
<keyword id="KW-0046">Antibiotic resistance</keyword>
<keyword id="KW-1003">Cell membrane</keyword>
<keyword id="KW-0133">Cell shape</keyword>
<keyword id="KW-0961">Cell wall biogenesis/degradation</keyword>
<keyword id="KW-0378">Hydrolase</keyword>
<keyword id="KW-0472">Membrane</keyword>
<keyword id="KW-0573">Peptidoglycan synthesis</keyword>
<keyword id="KW-0812">Transmembrane</keyword>
<keyword id="KW-1133">Transmembrane helix</keyword>
<evidence type="ECO:0000255" key="1">
    <source>
        <dbReference type="HAMAP-Rule" id="MF_01006"/>
    </source>
</evidence>
<dbReference type="EC" id="3.6.1.27" evidence="1"/>
<dbReference type="EMBL" id="AM711867">
    <property type="protein sequence ID" value="CAN01748.1"/>
    <property type="molecule type" value="Genomic_DNA"/>
</dbReference>
<dbReference type="RefSeq" id="WP_012038383.1">
    <property type="nucleotide sequence ID" value="NC_009480.1"/>
</dbReference>
<dbReference type="SMR" id="A5CRN8"/>
<dbReference type="GeneID" id="92947680"/>
<dbReference type="KEGG" id="cmi:CMM_1695"/>
<dbReference type="eggNOG" id="COG1968">
    <property type="taxonomic scope" value="Bacteria"/>
</dbReference>
<dbReference type="HOGENOM" id="CLU_060296_1_0_11"/>
<dbReference type="OrthoDB" id="9808289at2"/>
<dbReference type="PHI-base" id="PHI:123049"/>
<dbReference type="Proteomes" id="UP000001564">
    <property type="component" value="Chromosome"/>
</dbReference>
<dbReference type="GO" id="GO:0005886">
    <property type="term" value="C:plasma membrane"/>
    <property type="evidence" value="ECO:0007669"/>
    <property type="project" value="UniProtKB-SubCell"/>
</dbReference>
<dbReference type="GO" id="GO:0050380">
    <property type="term" value="F:undecaprenyl-diphosphatase activity"/>
    <property type="evidence" value="ECO:0007669"/>
    <property type="project" value="UniProtKB-UniRule"/>
</dbReference>
<dbReference type="GO" id="GO:0071555">
    <property type="term" value="P:cell wall organization"/>
    <property type="evidence" value="ECO:0007669"/>
    <property type="project" value="UniProtKB-KW"/>
</dbReference>
<dbReference type="GO" id="GO:0009252">
    <property type="term" value="P:peptidoglycan biosynthetic process"/>
    <property type="evidence" value="ECO:0007669"/>
    <property type="project" value="UniProtKB-KW"/>
</dbReference>
<dbReference type="GO" id="GO:0008360">
    <property type="term" value="P:regulation of cell shape"/>
    <property type="evidence" value="ECO:0007669"/>
    <property type="project" value="UniProtKB-KW"/>
</dbReference>
<dbReference type="GO" id="GO:0046677">
    <property type="term" value="P:response to antibiotic"/>
    <property type="evidence" value="ECO:0007669"/>
    <property type="project" value="UniProtKB-UniRule"/>
</dbReference>
<dbReference type="HAMAP" id="MF_01006">
    <property type="entry name" value="Undec_diphosphatase"/>
    <property type="match status" value="1"/>
</dbReference>
<dbReference type="InterPro" id="IPR003824">
    <property type="entry name" value="UppP"/>
</dbReference>
<dbReference type="NCBIfam" id="NF001392">
    <property type="entry name" value="PRK00281.2-1"/>
    <property type="match status" value="1"/>
</dbReference>
<dbReference type="NCBIfam" id="TIGR00753">
    <property type="entry name" value="undec_PP_bacA"/>
    <property type="match status" value="1"/>
</dbReference>
<dbReference type="PANTHER" id="PTHR30622">
    <property type="entry name" value="UNDECAPRENYL-DIPHOSPHATASE"/>
    <property type="match status" value="1"/>
</dbReference>
<dbReference type="PANTHER" id="PTHR30622:SF4">
    <property type="entry name" value="UNDECAPRENYL-DIPHOSPHATASE"/>
    <property type="match status" value="1"/>
</dbReference>
<dbReference type="Pfam" id="PF02673">
    <property type="entry name" value="BacA"/>
    <property type="match status" value="1"/>
</dbReference>
<feature type="chain" id="PRO_1000062795" description="Undecaprenyl-diphosphatase">
    <location>
        <begin position="1"/>
        <end position="272"/>
    </location>
</feature>
<feature type="transmembrane region" description="Helical" evidence="1">
    <location>
        <begin position="1"/>
        <end position="21"/>
    </location>
</feature>
<feature type="transmembrane region" description="Helical" evidence="1">
    <location>
        <begin position="38"/>
        <end position="58"/>
    </location>
</feature>
<feature type="transmembrane region" description="Helical" evidence="1">
    <location>
        <begin position="84"/>
        <end position="104"/>
    </location>
</feature>
<feature type="transmembrane region" description="Helical" evidence="1">
    <location>
        <begin position="112"/>
        <end position="132"/>
    </location>
</feature>
<feature type="transmembrane region" description="Helical" evidence="1">
    <location>
        <begin position="145"/>
        <end position="165"/>
    </location>
</feature>
<feature type="transmembrane region" description="Helical" evidence="1">
    <location>
        <begin position="183"/>
        <end position="203"/>
    </location>
</feature>
<feature type="transmembrane region" description="Helical" evidence="1">
    <location>
        <begin position="219"/>
        <end position="239"/>
    </location>
</feature>
<feature type="transmembrane region" description="Helical" evidence="1">
    <location>
        <begin position="250"/>
        <end position="270"/>
    </location>
</feature>
<protein>
    <recommendedName>
        <fullName evidence="1">Undecaprenyl-diphosphatase</fullName>
        <ecNumber evidence="1">3.6.1.27</ecNumber>
    </recommendedName>
    <alternativeName>
        <fullName evidence="1">Bacitracin resistance protein</fullName>
    </alternativeName>
    <alternativeName>
        <fullName evidence="1">Undecaprenyl pyrophosphate phosphatase</fullName>
    </alternativeName>
</protein>
<sequence>MSYLEAIILGLVQGLTEFLPISSSAHLRIAGLFMGGDPGATFTAITQLGTELAVVVFFRKRIGKVLSAWSRSLRGGMPKGDPDVRMGWLVIIGTIPIGIAGYLFQDTIRSTFRSLWIVAIVLIVFGILLGLADRYSRSDRLEKDMTYGHGVSIGIAQALALVPGVSRSGATTTAARAFGYSRPVAAEYSFLLAVPAVFGSGLYELVKSFDETGQAGAGQTAVATLIAFIVGLAVIAGLMRYISTRTFMPFVVYRVALGVVLLVLLGTGAIAA</sequence>